<feature type="chain" id="PRO_0000328849" description="tRNA N(3)-cytidine methyltransferase METTL2">
    <location>
        <begin position="1"/>
        <end position="353"/>
    </location>
</feature>
<feature type="region of interest" description="Disordered" evidence="4">
    <location>
        <begin position="1"/>
        <end position="37"/>
    </location>
</feature>
<feature type="binding site" evidence="2">
    <location>
        <position position="93"/>
    </location>
    <ligand>
        <name>S-adenosyl-L-methionine</name>
        <dbReference type="ChEBI" id="CHEBI:59789"/>
    </ligand>
</feature>
<feature type="binding site" evidence="2">
    <location>
        <position position="97"/>
    </location>
    <ligand>
        <name>S-adenosyl-L-methionine</name>
        <dbReference type="ChEBI" id="CHEBI:59789"/>
    </ligand>
</feature>
<feature type="binding site" evidence="2">
    <location>
        <position position="165"/>
    </location>
    <ligand>
        <name>S-adenosyl-L-methionine</name>
        <dbReference type="ChEBI" id="CHEBI:59789"/>
    </ligand>
</feature>
<feature type="binding site" evidence="2">
    <location>
        <position position="190"/>
    </location>
    <ligand>
        <name>S-adenosyl-L-methionine</name>
        <dbReference type="ChEBI" id="CHEBI:59789"/>
    </ligand>
</feature>
<feature type="binding site" evidence="2">
    <location>
        <position position="216"/>
    </location>
    <ligand>
        <name>S-adenosyl-L-methionine</name>
        <dbReference type="ChEBI" id="CHEBI:59789"/>
    </ligand>
</feature>
<feature type="binding site" evidence="2">
    <location>
        <position position="237"/>
    </location>
    <ligand>
        <name>S-adenosyl-L-methionine</name>
        <dbReference type="ChEBI" id="CHEBI:59789"/>
    </ligand>
</feature>
<feature type="sequence conflict" description="In Ref. 1; AAH92943." evidence="5" ref="1">
    <original>P</original>
    <variation>T</variation>
    <location>
        <position position="17"/>
    </location>
</feature>
<feature type="sequence conflict" description="In Ref. 1; AAH92943." evidence="5" ref="1">
    <original>R</original>
    <variation>L</variation>
    <location>
        <position position="298"/>
    </location>
</feature>
<feature type="sequence conflict" description="In Ref. 1; AAH92943." evidence="5" ref="1">
    <original>V</original>
    <variation>A</variation>
    <location>
        <position position="323"/>
    </location>
</feature>
<accession>A8KBL7</accession>
<accession>Q568A6</accession>
<evidence type="ECO:0000250" key="1">
    <source>
        <dbReference type="UniProtKB" id="Q8BMK1"/>
    </source>
</evidence>
<evidence type="ECO:0000250" key="2">
    <source>
        <dbReference type="UniProtKB" id="Q8TCB7"/>
    </source>
</evidence>
<evidence type="ECO:0000250" key="3">
    <source>
        <dbReference type="UniProtKB" id="Q96IZ6"/>
    </source>
</evidence>
<evidence type="ECO:0000256" key="4">
    <source>
        <dbReference type="SAM" id="MobiDB-lite"/>
    </source>
</evidence>
<evidence type="ECO:0000305" key="5"/>
<dbReference type="EC" id="2.1.1.-" evidence="1"/>
<dbReference type="EMBL" id="BC092943">
    <property type="protein sequence ID" value="AAH92943.1"/>
    <property type="molecule type" value="mRNA"/>
</dbReference>
<dbReference type="EMBL" id="BC154164">
    <property type="protein sequence ID" value="AAI54165.1"/>
    <property type="molecule type" value="mRNA"/>
</dbReference>
<dbReference type="RefSeq" id="NP_001017902.1">
    <property type="nucleotide sequence ID" value="NM_001017902.1"/>
</dbReference>
<dbReference type="SMR" id="A8KBL7"/>
<dbReference type="FunCoup" id="A8KBL7">
    <property type="interactions" value="2588"/>
</dbReference>
<dbReference type="STRING" id="7955.ENSDARP00000006586"/>
<dbReference type="PaxDb" id="7955-ENSDARP00000006586"/>
<dbReference type="PeptideAtlas" id="A8KBL7"/>
<dbReference type="DNASU" id="100006618"/>
<dbReference type="Ensembl" id="ENSDART00000180956">
    <property type="protein sequence ID" value="ENSDARP00000150100"/>
    <property type="gene ID" value="ENSDARG00000113100"/>
</dbReference>
<dbReference type="GeneID" id="100006618"/>
<dbReference type="KEGG" id="dre:100006618"/>
<dbReference type="AGR" id="ZFIN:ZDB-GENE-050417-462"/>
<dbReference type="CTD" id="339175"/>
<dbReference type="ZFIN" id="ZDB-GENE-050417-462">
    <property type="gene designation" value="mettl2a"/>
</dbReference>
<dbReference type="eggNOG" id="KOG2361">
    <property type="taxonomic scope" value="Eukaryota"/>
</dbReference>
<dbReference type="InParanoid" id="A8KBL7"/>
<dbReference type="OMA" id="KHNACKT"/>
<dbReference type="OrthoDB" id="417697at2759"/>
<dbReference type="PhylomeDB" id="A8KBL7"/>
<dbReference type="PRO" id="PR:A8KBL7"/>
<dbReference type="Proteomes" id="UP000000437">
    <property type="component" value="Alternate scaffold 3"/>
</dbReference>
<dbReference type="Proteomes" id="UP000000437">
    <property type="component" value="Chromosome 3"/>
</dbReference>
<dbReference type="Bgee" id="ENSDARG00000113100">
    <property type="expression patterns" value="Expressed in multicellular organism"/>
</dbReference>
<dbReference type="GO" id="GO:0005737">
    <property type="term" value="C:cytoplasm"/>
    <property type="evidence" value="ECO:0000250"/>
    <property type="project" value="UniProtKB"/>
</dbReference>
<dbReference type="GO" id="GO:0016427">
    <property type="term" value="F:tRNA (cytidine) methyltransferase activity"/>
    <property type="evidence" value="ECO:0000250"/>
    <property type="project" value="UniProtKB"/>
</dbReference>
<dbReference type="GO" id="GO:0052735">
    <property type="term" value="F:tRNA (cytidine-3-)-methyltransferase activity"/>
    <property type="evidence" value="ECO:0000318"/>
    <property type="project" value="GO_Central"/>
</dbReference>
<dbReference type="GO" id="GO:0030488">
    <property type="term" value="P:tRNA methylation"/>
    <property type="evidence" value="ECO:0000250"/>
    <property type="project" value="UniProtKB"/>
</dbReference>
<dbReference type="CDD" id="cd02440">
    <property type="entry name" value="AdoMet_MTases"/>
    <property type="match status" value="1"/>
</dbReference>
<dbReference type="FunFam" id="3.40.50.150:FF:000145">
    <property type="entry name" value="Methyltransferase-like protein"/>
    <property type="match status" value="1"/>
</dbReference>
<dbReference type="Gene3D" id="3.40.50.150">
    <property type="entry name" value="Vaccinia Virus protein VP39"/>
    <property type="match status" value="1"/>
</dbReference>
<dbReference type="InterPro" id="IPR013217">
    <property type="entry name" value="Methyltransf_12"/>
</dbReference>
<dbReference type="InterPro" id="IPR026113">
    <property type="entry name" value="METTL2/6/8-like"/>
</dbReference>
<dbReference type="InterPro" id="IPR029063">
    <property type="entry name" value="SAM-dependent_MTases_sf"/>
</dbReference>
<dbReference type="PANTHER" id="PTHR22809">
    <property type="entry name" value="METHYLTRANSFERASE-RELATED"/>
    <property type="match status" value="1"/>
</dbReference>
<dbReference type="PANTHER" id="PTHR22809:SF4">
    <property type="entry name" value="TRNA N(3)-METHYLCYTIDINE METHYLTRANSFERASE METTL2A-RELATED"/>
    <property type="match status" value="1"/>
</dbReference>
<dbReference type="Pfam" id="PF08242">
    <property type="entry name" value="Methyltransf_12"/>
    <property type="match status" value="1"/>
</dbReference>
<dbReference type="PIRSF" id="PIRSF037755">
    <property type="entry name" value="Mettl2_prd"/>
    <property type="match status" value="1"/>
</dbReference>
<dbReference type="SUPFAM" id="SSF53335">
    <property type="entry name" value="S-adenosyl-L-methionine-dependent methyltransferases"/>
    <property type="match status" value="1"/>
</dbReference>
<sequence>MAAPVVAADSPVIENMPETAGGATENSAEAQKRPQFGTRFLTDPRQVFQHNAWDNVEWSAEQEEAALKKVQENSQPLPAEKQEEFDNRANEYWNDFYTIHENRFFKDRHWLFTEFPELAPQQKHLRGAEEKESLEHMLNGEDISLNPTHDEFPGASASYRILEVGCGVGNTVFPILKTNNDPGLFVYCCDFSSTAVDLVKSNPEYDPSRCHAFVHDMSDESGEYPMPDHSLDVIVLIFVLSALHPEKMQKSINRLGRLLKPGGVLLLRDYGRYDMAQLRFKKGRCLSENFYVRGDGTRVYFFTQDELHDLFSSAGLEKLQNLVDRRLQVNRGKQLTMYRVWVQCKYRKVLAPT</sequence>
<organism>
    <name type="scientific">Danio rerio</name>
    <name type="common">Zebrafish</name>
    <name type="synonym">Brachydanio rerio</name>
    <dbReference type="NCBI Taxonomy" id="7955"/>
    <lineage>
        <taxon>Eukaryota</taxon>
        <taxon>Metazoa</taxon>
        <taxon>Chordata</taxon>
        <taxon>Craniata</taxon>
        <taxon>Vertebrata</taxon>
        <taxon>Euteleostomi</taxon>
        <taxon>Actinopterygii</taxon>
        <taxon>Neopterygii</taxon>
        <taxon>Teleostei</taxon>
        <taxon>Ostariophysi</taxon>
        <taxon>Cypriniformes</taxon>
        <taxon>Danionidae</taxon>
        <taxon>Danioninae</taxon>
        <taxon>Danio</taxon>
    </lineage>
</organism>
<proteinExistence type="evidence at transcript level"/>
<comment type="function">
    <text evidence="3">S-adenosyl-L-methionine-dependent methyltransferase that mediates N(3)-methylcytidine modification of residue 32 of the tRNA anticodon loop of tRNA(Thr)(UGU) and tRNA(Arg)(CCU). N(3)-methylcytidine methylation by mettl2a requires the N6-threonylcarbamoylation of tRNA (t6A37) by the EKC/KEOPS complex as prerequisite.</text>
</comment>
<comment type="catalytic activity">
    <reaction evidence="1">
        <text>cytidine(32) in tRNA(Thr) + S-adenosyl-L-methionine = N(3)-methylcytidine(32) in tRNA(Thr) + S-adenosyl-L-homocysteine + H(+)</text>
        <dbReference type="Rhea" id="RHEA:50960"/>
        <dbReference type="Rhea" id="RHEA-COMP:12850"/>
        <dbReference type="Rhea" id="RHEA-COMP:12852"/>
        <dbReference type="ChEBI" id="CHEBI:15378"/>
        <dbReference type="ChEBI" id="CHEBI:57856"/>
        <dbReference type="ChEBI" id="CHEBI:59789"/>
        <dbReference type="ChEBI" id="CHEBI:74894"/>
        <dbReference type="ChEBI" id="CHEBI:82748"/>
    </reaction>
    <physiologicalReaction direction="left-to-right" evidence="1">
        <dbReference type="Rhea" id="RHEA:50961"/>
    </physiologicalReaction>
</comment>
<comment type="catalytic activity">
    <reaction evidence="1">
        <text>cytidine(32) in tRNA(Arg)(CCU) + S-adenosyl-L-methionine = N(3)-methylcytidine(32) in tRNA(Arg)(CCU) + S-adenosyl-L-homocysteine + H(+)</text>
        <dbReference type="Rhea" id="RHEA:60912"/>
        <dbReference type="Rhea" id="RHEA-COMP:15710"/>
        <dbReference type="Rhea" id="RHEA-COMP:15712"/>
        <dbReference type="ChEBI" id="CHEBI:15378"/>
        <dbReference type="ChEBI" id="CHEBI:57856"/>
        <dbReference type="ChEBI" id="CHEBI:59789"/>
        <dbReference type="ChEBI" id="CHEBI:74894"/>
        <dbReference type="ChEBI" id="CHEBI:82748"/>
    </reaction>
    <physiologicalReaction direction="left-to-right" evidence="1">
        <dbReference type="Rhea" id="RHEA:60913"/>
    </physiologicalReaction>
</comment>
<comment type="subunit">
    <text evidence="3">Monomer.</text>
</comment>
<comment type="subcellular location">
    <subcellularLocation>
        <location evidence="3">Cytoplasm</location>
    </subcellularLocation>
</comment>
<comment type="similarity">
    <text evidence="5">Belongs to the methyltransferase superfamily. METL family.</text>
</comment>
<reference key="1">
    <citation type="submission" date="2007-10" db="EMBL/GenBank/DDBJ databases">
        <authorList>
            <consortium name="NIH - Zebrafish Gene Collection (ZGC) project"/>
        </authorList>
    </citation>
    <scope>NUCLEOTIDE SEQUENCE [LARGE SCALE MRNA]</scope>
    <source>
        <tissue>Embryo</tissue>
        <tissue>Ovary</tissue>
    </source>
</reference>
<name>MET2A_DANRE</name>
<protein>
    <recommendedName>
        <fullName evidence="5">tRNA N(3)-cytidine methyltransferase METTL2</fullName>
        <ecNumber evidence="1">2.1.1.-</ecNumber>
    </recommendedName>
    <alternativeName>
        <fullName>Methyltransferase-like protein 2-A</fullName>
    </alternativeName>
</protein>
<keyword id="KW-0963">Cytoplasm</keyword>
<keyword id="KW-0489">Methyltransferase</keyword>
<keyword id="KW-1185">Reference proteome</keyword>
<keyword id="KW-0949">S-adenosyl-L-methionine</keyword>
<keyword id="KW-0808">Transferase</keyword>
<keyword id="KW-0819">tRNA processing</keyword>
<gene>
    <name type="primary">mettl2a</name>
    <name type="synonym">mettl2</name>
    <name type="ORF">zgc:110598</name>
</gene>